<comment type="function">
    <text evidence="1">Catalyzes the interconversion of beta-pyran and beta-furan forms of D-ribose.</text>
</comment>
<comment type="catalytic activity">
    <reaction evidence="1">
        <text>beta-D-ribopyranose = beta-D-ribofuranose</text>
        <dbReference type="Rhea" id="RHEA:25432"/>
        <dbReference type="ChEBI" id="CHEBI:27476"/>
        <dbReference type="ChEBI" id="CHEBI:47002"/>
        <dbReference type="EC" id="5.4.99.62"/>
    </reaction>
</comment>
<comment type="pathway">
    <text evidence="1">Carbohydrate metabolism; D-ribose degradation; D-ribose 5-phosphate from beta-D-ribopyranose: step 1/2.</text>
</comment>
<comment type="subunit">
    <text evidence="1">Homodecamer.</text>
</comment>
<comment type="subcellular location">
    <subcellularLocation>
        <location evidence="1">Cytoplasm</location>
    </subcellularLocation>
</comment>
<comment type="similarity">
    <text evidence="1">Belongs to the RbsD / FucU family. RbsD subfamily.</text>
</comment>
<reference key="1">
    <citation type="journal article" date="2006" name="J. Bacteriol.">
        <title>Genome sequence of Aeromonas hydrophila ATCC 7966T: jack of all trades.</title>
        <authorList>
            <person name="Seshadri R."/>
            <person name="Joseph S.W."/>
            <person name="Chopra A.K."/>
            <person name="Sha J."/>
            <person name="Shaw J."/>
            <person name="Graf J."/>
            <person name="Haft D.H."/>
            <person name="Wu M."/>
            <person name="Ren Q."/>
            <person name="Rosovitz M.J."/>
            <person name="Madupu R."/>
            <person name="Tallon L."/>
            <person name="Kim M."/>
            <person name="Jin S."/>
            <person name="Vuong H."/>
            <person name="Stine O.C."/>
            <person name="Ali A."/>
            <person name="Horneman A.J."/>
            <person name="Heidelberg J.F."/>
        </authorList>
    </citation>
    <scope>NUCLEOTIDE SEQUENCE [LARGE SCALE GENOMIC DNA]</scope>
    <source>
        <strain>ATCC 7966 / DSM 30187 / BCRC 13018 / CCUG 14551 / JCM 1027 / KCTC 2358 / NCIMB 9240 / NCTC 8049</strain>
    </source>
</reference>
<keyword id="KW-0119">Carbohydrate metabolism</keyword>
<keyword id="KW-0963">Cytoplasm</keyword>
<keyword id="KW-0413">Isomerase</keyword>
<keyword id="KW-1185">Reference proteome</keyword>
<dbReference type="EC" id="5.4.99.62" evidence="1"/>
<dbReference type="EMBL" id="CP000462">
    <property type="protein sequence ID" value="ABK39714.1"/>
    <property type="molecule type" value="Genomic_DNA"/>
</dbReference>
<dbReference type="RefSeq" id="WP_011706155.1">
    <property type="nucleotide sequence ID" value="NC_008570.1"/>
</dbReference>
<dbReference type="RefSeq" id="YP_856832.1">
    <property type="nucleotide sequence ID" value="NC_008570.1"/>
</dbReference>
<dbReference type="SMR" id="A0KKN1"/>
<dbReference type="STRING" id="380703.AHA_2309"/>
<dbReference type="EnsemblBacteria" id="ABK39714">
    <property type="protein sequence ID" value="ABK39714"/>
    <property type="gene ID" value="AHA_2309"/>
</dbReference>
<dbReference type="GeneID" id="4487766"/>
<dbReference type="KEGG" id="aha:AHA_2309"/>
<dbReference type="PATRIC" id="fig|380703.7.peg.2310"/>
<dbReference type="eggNOG" id="COG1869">
    <property type="taxonomic scope" value="Bacteria"/>
</dbReference>
<dbReference type="HOGENOM" id="CLU_135498_0_0_6"/>
<dbReference type="OrthoDB" id="9805009at2"/>
<dbReference type="UniPathway" id="UPA00916">
    <property type="reaction ID" value="UER00888"/>
</dbReference>
<dbReference type="Proteomes" id="UP000000756">
    <property type="component" value="Chromosome"/>
</dbReference>
<dbReference type="GO" id="GO:0005829">
    <property type="term" value="C:cytosol"/>
    <property type="evidence" value="ECO:0007669"/>
    <property type="project" value="TreeGrafter"/>
</dbReference>
<dbReference type="GO" id="GO:0062193">
    <property type="term" value="F:D-ribose pyranase activity"/>
    <property type="evidence" value="ECO:0007669"/>
    <property type="project" value="UniProtKB-EC"/>
</dbReference>
<dbReference type="GO" id="GO:0016872">
    <property type="term" value="F:intramolecular lyase activity"/>
    <property type="evidence" value="ECO:0007669"/>
    <property type="project" value="UniProtKB-UniRule"/>
</dbReference>
<dbReference type="GO" id="GO:0048029">
    <property type="term" value="F:monosaccharide binding"/>
    <property type="evidence" value="ECO:0007669"/>
    <property type="project" value="InterPro"/>
</dbReference>
<dbReference type="GO" id="GO:0019303">
    <property type="term" value="P:D-ribose catabolic process"/>
    <property type="evidence" value="ECO:0007669"/>
    <property type="project" value="UniProtKB-UniRule"/>
</dbReference>
<dbReference type="Gene3D" id="3.40.1650.10">
    <property type="entry name" value="RbsD-like domain"/>
    <property type="match status" value="1"/>
</dbReference>
<dbReference type="HAMAP" id="MF_01661">
    <property type="entry name" value="D_rib_pyranase"/>
    <property type="match status" value="1"/>
</dbReference>
<dbReference type="InterPro" id="IPR023064">
    <property type="entry name" value="D-ribose_pyranase"/>
</dbReference>
<dbReference type="InterPro" id="IPR023750">
    <property type="entry name" value="RbsD-like_sf"/>
</dbReference>
<dbReference type="InterPro" id="IPR007721">
    <property type="entry name" value="RbsD_FucU"/>
</dbReference>
<dbReference type="NCBIfam" id="NF008761">
    <property type="entry name" value="PRK11797.1"/>
    <property type="match status" value="1"/>
</dbReference>
<dbReference type="PANTHER" id="PTHR37831">
    <property type="entry name" value="D-RIBOSE PYRANASE"/>
    <property type="match status" value="1"/>
</dbReference>
<dbReference type="PANTHER" id="PTHR37831:SF1">
    <property type="entry name" value="D-RIBOSE PYRANASE"/>
    <property type="match status" value="1"/>
</dbReference>
<dbReference type="Pfam" id="PF05025">
    <property type="entry name" value="RbsD_FucU"/>
    <property type="match status" value="1"/>
</dbReference>
<dbReference type="SUPFAM" id="SSF102546">
    <property type="entry name" value="RbsD-like"/>
    <property type="match status" value="1"/>
</dbReference>
<evidence type="ECO:0000255" key="1">
    <source>
        <dbReference type="HAMAP-Rule" id="MF_01661"/>
    </source>
</evidence>
<accession>A0KKN1</accession>
<feature type="chain" id="PRO_0000346167" description="D-ribose pyranase">
    <location>
        <begin position="1"/>
        <end position="139"/>
    </location>
</feature>
<feature type="active site" description="Proton donor" evidence="1">
    <location>
        <position position="20"/>
    </location>
</feature>
<feature type="binding site" evidence="1">
    <location>
        <position position="28"/>
    </location>
    <ligand>
        <name>substrate</name>
    </ligand>
</feature>
<feature type="binding site" evidence="1">
    <location>
        <position position="106"/>
    </location>
    <ligand>
        <name>substrate</name>
    </ligand>
</feature>
<feature type="binding site" evidence="1">
    <location>
        <begin position="128"/>
        <end position="130"/>
    </location>
    <ligand>
        <name>substrate</name>
    </ligand>
</feature>
<name>RBSD_AERHH</name>
<organism>
    <name type="scientific">Aeromonas hydrophila subsp. hydrophila (strain ATCC 7966 / DSM 30187 / BCRC 13018 / CCUG 14551 / JCM 1027 / KCTC 2358 / NCIMB 9240 / NCTC 8049)</name>
    <dbReference type="NCBI Taxonomy" id="380703"/>
    <lineage>
        <taxon>Bacteria</taxon>
        <taxon>Pseudomonadati</taxon>
        <taxon>Pseudomonadota</taxon>
        <taxon>Gammaproteobacteria</taxon>
        <taxon>Aeromonadales</taxon>
        <taxon>Aeromonadaceae</taxon>
        <taxon>Aeromonas</taxon>
    </lineage>
</organism>
<proteinExistence type="inferred from homology"/>
<gene>
    <name evidence="1" type="primary">rbsD</name>
    <name type="ordered locus">AHA_2309</name>
</gene>
<protein>
    <recommendedName>
        <fullName evidence="1">D-ribose pyranase</fullName>
        <ecNumber evidence="1">5.4.99.62</ecNumber>
    </recommendedName>
</protein>
<sequence length="139" mass="14676">MKRGVLLNAPLSALVARMGHTDEITVCDAGLPIPAGPERIDLALMAGTPSLETVLTALLTDLVVEKVIMASEIKQISPAAHQALVDQLEAHAAAQGKPITIEYCLHEAFKARSHQSKAIVRSGEVTPYANLILCAGVAF</sequence>